<gene>
    <name type="ordered locus">CPR_1749</name>
</gene>
<accession>Q0SS43</accession>
<proteinExistence type="inferred from homology"/>
<feature type="chain" id="PRO_0000260069" description="UPF0297 protein CPR_1749">
    <location>
        <begin position="1"/>
        <end position="85"/>
    </location>
</feature>
<organism>
    <name type="scientific">Clostridium perfringens (strain SM101 / Type A)</name>
    <dbReference type="NCBI Taxonomy" id="289380"/>
    <lineage>
        <taxon>Bacteria</taxon>
        <taxon>Bacillati</taxon>
        <taxon>Bacillota</taxon>
        <taxon>Clostridia</taxon>
        <taxon>Eubacteriales</taxon>
        <taxon>Clostridiaceae</taxon>
        <taxon>Clostridium</taxon>
    </lineage>
</organism>
<evidence type="ECO:0000255" key="1">
    <source>
        <dbReference type="HAMAP-Rule" id="MF_01507"/>
    </source>
</evidence>
<reference key="1">
    <citation type="journal article" date="2006" name="Genome Res.">
        <title>Skewed genomic variability in strains of the toxigenic bacterial pathogen, Clostridium perfringens.</title>
        <authorList>
            <person name="Myers G.S.A."/>
            <person name="Rasko D.A."/>
            <person name="Cheung J.K."/>
            <person name="Ravel J."/>
            <person name="Seshadri R."/>
            <person name="DeBoy R.T."/>
            <person name="Ren Q."/>
            <person name="Varga J."/>
            <person name="Awad M.M."/>
            <person name="Brinkac L.M."/>
            <person name="Daugherty S.C."/>
            <person name="Haft D.H."/>
            <person name="Dodson R.J."/>
            <person name="Madupu R."/>
            <person name="Nelson W.C."/>
            <person name="Rosovitz M.J."/>
            <person name="Sullivan S.A."/>
            <person name="Khouri H."/>
            <person name="Dimitrov G.I."/>
            <person name="Watkins K.L."/>
            <person name="Mulligan S."/>
            <person name="Benton J."/>
            <person name="Radune D."/>
            <person name="Fisher D.J."/>
            <person name="Atkins H.S."/>
            <person name="Hiscox T."/>
            <person name="Jost B.H."/>
            <person name="Billington S.J."/>
            <person name="Songer J.G."/>
            <person name="McClane B.A."/>
            <person name="Titball R.W."/>
            <person name="Rood J.I."/>
            <person name="Melville S.B."/>
            <person name="Paulsen I.T."/>
        </authorList>
    </citation>
    <scope>NUCLEOTIDE SEQUENCE [LARGE SCALE GENOMIC DNA]</scope>
    <source>
        <strain>SM101 / Type A</strain>
    </source>
</reference>
<sequence>MSNNFDHTMQFDFSKNKEDLTKSILTDVYNSLKEKGYNPVNQLVGYLISGDPTYITNYNGARALVRKLERDEILEEVIKSYLEIK</sequence>
<protein>
    <recommendedName>
        <fullName evidence="1">UPF0297 protein CPR_1749</fullName>
    </recommendedName>
</protein>
<dbReference type="EMBL" id="CP000312">
    <property type="protein sequence ID" value="ABG85486.1"/>
    <property type="molecule type" value="Genomic_DNA"/>
</dbReference>
<dbReference type="RefSeq" id="WP_003451703.1">
    <property type="nucleotide sequence ID" value="NZ_CAXVJE010000001.1"/>
</dbReference>
<dbReference type="SMR" id="Q0SS43"/>
<dbReference type="KEGG" id="cpr:CPR_1749"/>
<dbReference type="BioCyc" id="CPER289380:GI76-1760-MONOMER"/>
<dbReference type="Proteomes" id="UP000001824">
    <property type="component" value="Chromosome"/>
</dbReference>
<dbReference type="HAMAP" id="MF_01507">
    <property type="entry name" value="UPF0297"/>
    <property type="match status" value="1"/>
</dbReference>
<dbReference type="InterPro" id="IPR009309">
    <property type="entry name" value="IreB"/>
</dbReference>
<dbReference type="NCBIfam" id="NF003997">
    <property type="entry name" value="PRK05473.1"/>
    <property type="match status" value="1"/>
</dbReference>
<dbReference type="PANTHER" id="PTHR40067">
    <property type="entry name" value="UPF0297 PROTEIN YRZL"/>
    <property type="match status" value="1"/>
</dbReference>
<dbReference type="PANTHER" id="PTHR40067:SF1">
    <property type="entry name" value="UPF0297 PROTEIN YRZL"/>
    <property type="match status" value="1"/>
</dbReference>
<dbReference type="Pfam" id="PF06135">
    <property type="entry name" value="IreB"/>
    <property type="match status" value="1"/>
</dbReference>
<dbReference type="PIRSF" id="PIRSF037258">
    <property type="entry name" value="DUF965_bac"/>
    <property type="match status" value="1"/>
</dbReference>
<name>Y1749_CLOPS</name>
<comment type="similarity">
    <text evidence="1">Belongs to the UPF0297 family.</text>
</comment>